<accession>Q8TIW3</accession>
<keyword id="KW-0963">Cytoplasm</keyword>
<keyword id="KW-0227">DNA damage</keyword>
<keyword id="KW-0234">DNA repair</keyword>
<keyword id="KW-0235">DNA replication</keyword>
<keyword id="KW-0238">DNA-binding</keyword>
<keyword id="KW-0239">DNA-directed DNA polymerase</keyword>
<keyword id="KW-0460">Magnesium</keyword>
<keyword id="KW-0479">Metal-binding</keyword>
<keyword id="KW-0515">Mutator protein</keyword>
<keyword id="KW-0548">Nucleotidyltransferase</keyword>
<keyword id="KW-1185">Reference proteome</keyword>
<keyword id="KW-0808">Transferase</keyword>
<dbReference type="EC" id="2.7.7.7" evidence="1"/>
<dbReference type="EMBL" id="AE010299">
    <property type="protein sequence ID" value="AAM07376.1"/>
    <property type="molecule type" value="Genomic_DNA"/>
</dbReference>
<dbReference type="SMR" id="Q8TIW3"/>
<dbReference type="STRING" id="188937.MA_4027"/>
<dbReference type="EnsemblBacteria" id="AAM07376">
    <property type="protein sequence ID" value="AAM07376"/>
    <property type="gene ID" value="MA_4027"/>
</dbReference>
<dbReference type="KEGG" id="mac:MA_4027"/>
<dbReference type="HOGENOM" id="CLU_012348_1_2_2"/>
<dbReference type="InParanoid" id="Q8TIW3"/>
<dbReference type="PhylomeDB" id="Q8TIW3"/>
<dbReference type="BRENDA" id="2.7.7.7">
    <property type="organism ID" value="7224"/>
</dbReference>
<dbReference type="Proteomes" id="UP000002487">
    <property type="component" value="Chromosome"/>
</dbReference>
<dbReference type="GO" id="GO:0005737">
    <property type="term" value="C:cytoplasm"/>
    <property type="evidence" value="ECO:0007669"/>
    <property type="project" value="UniProtKB-SubCell"/>
</dbReference>
<dbReference type="GO" id="GO:0003684">
    <property type="term" value="F:damaged DNA binding"/>
    <property type="evidence" value="ECO:0007669"/>
    <property type="project" value="InterPro"/>
</dbReference>
<dbReference type="GO" id="GO:0003887">
    <property type="term" value="F:DNA-directed DNA polymerase activity"/>
    <property type="evidence" value="ECO:0000318"/>
    <property type="project" value="GO_Central"/>
</dbReference>
<dbReference type="GO" id="GO:0000287">
    <property type="term" value="F:magnesium ion binding"/>
    <property type="evidence" value="ECO:0007669"/>
    <property type="project" value="UniProtKB-UniRule"/>
</dbReference>
<dbReference type="GO" id="GO:0006261">
    <property type="term" value="P:DNA-templated DNA replication"/>
    <property type="evidence" value="ECO:0007669"/>
    <property type="project" value="UniProtKB-UniRule"/>
</dbReference>
<dbReference type="GO" id="GO:0042276">
    <property type="term" value="P:error-prone translesion synthesis"/>
    <property type="evidence" value="ECO:0000318"/>
    <property type="project" value="GO_Central"/>
</dbReference>
<dbReference type="CDD" id="cd03586">
    <property type="entry name" value="PolY_Pol_IV_kappa"/>
    <property type="match status" value="1"/>
</dbReference>
<dbReference type="FunFam" id="3.40.1170.60:FF:000009">
    <property type="entry name" value="DNA polymerase IV"/>
    <property type="match status" value="1"/>
</dbReference>
<dbReference type="Gene3D" id="3.30.70.270">
    <property type="match status" value="1"/>
</dbReference>
<dbReference type="Gene3D" id="3.40.1170.60">
    <property type="match status" value="1"/>
</dbReference>
<dbReference type="Gene3D" id="1.10.150.20">
    <property type="entry name" value="5' to 3' exonuclease, C-terminal subdomain"/>
    <property type="match status" value="1"/>
</dbReference>
<dbReference type="Gene3D" id="3.30.1490.100">
    <property type="entry name" value="DNA polymerase, Y-family, little finger domain"/>
    <property type="match status" value="1"/>
</dbReference>
<dbReference type="HAMAP" id="MF_01113">
    <property type="entry name" value="DNApol_IV"/>
    <property type="match status" value="1"/>
</dbReference>
<dbReference type="InterPro" id="IPR043502">
    <property type="entry name" value="DNA/RNA_pol_sf"/>
</dbReference>
<dbReference type="InterPro" id="IPR036775">
    <property type="entry name" value="DNA_pol_Y-fam_lit_finger_sf"/>
</dbReference>
<dbReference type="InterPro" id="IPR017961">
    <property type="entry name" value="DNA_pol_Y-fam_little_finger"/>
</dbReference>
<dbReference type="InterPro" id="IPR050116">
    <property type="entry name" value="DNA_polymerase-Y"/>
</dbReference>
<dbReference type="InterPro" id="IPR022880">
    <property type="entry name" value="DNApol_IV"/>
</dbReference>
<dbReference type="InterPro" id="IPR024728">
    <property type="entry name" value="PolY_HhH_motif"/>
</dbReference>
<dbReference type="InterPro" id="IPR043128">
    <property type="entry name" value="Rev_trsase/Diguanyl_cyclase"/>
</dbReference>
<dbReference type="InterPro" id="IPR001126">
    <property type="entry name" value="UmuC"/>
</dbReference>
<dbReference type="NCBIfam" id="NF002677">
    <property type="entry name" value="PRK02406.1"/>
    <property type="match status" value="1"/>
</dbReference>
<dbReference type="PANTHER" id="PTHR11076:SF33">
    <property type="entry name" value="DNA POLYMERASE KAPPA"/>
    <property type="match status" value="1"/>
</dbReference>
<dbReference type="PANTHER" id="PTHR11076">
    <property type="entry name" value="DNA REPAIR POLYMERASE UMUC / TRANSFERASE FAMILY MEMBER"/>
    <property type="match status" value="1"/>
</dbReference>
<dbReference type="Pfam" id="PF00817">
    <property type="entry name" value="IMS"/>
    <property type="match status" value="1"/>
</dbReference>
<dbReference type="Pfam" id="PF11799">
    <property type="entry name" value="IMS_C"/>
    <property type="match status" value="1"/>
</dbReference>
<dbReference type="Pfam" id="PF11798">
    <property type="entry name" value="IMS_HHH"/>
    <property type="match status" value="1"/>
</dbReference>
<dbReference type="SUPFAM" id="SSF56672">
    <property type="entry name" value="DNA/RNA polymerases"/>
    <property type="match status" value="1"/>
</dbReference>
<dbReference type="SUPFAM" id="SSF100879">
    <property type="entry name" value="Lesion bypass DNA polymerase (Y-family), little finger domain"/>
    <property type="match status" value="1"/>
</dbReference>
<dbReference type="PROSITE" id="PS50173">
    <property type="entry name" value="UMUC"/>
    <property type="match status" value="1"/>
</dbReference>
<proteinExistence type="inferred from homology"/>
<sequence>MMQRVIIHVDMDYFYAAIEEREKPELLGKAVVVCMLSGRSELSGSVSTCNYIAREFGIRSGMPCSRAKKLNPEAVFLPVRKEFYTSVSDRIMEILRSYADPGENGDSFEQISVDEAFLEITYRAGGDFNLAFELGMQIKKEIKEKENLTCSIGIGPNKLIAKMASSAKKPDGITVVSPENQEAFLWPLKVSKLWGIGDVTAKKLQEMDIVTVKDLAEHDVIELISTFGKSRGTWLKQAASGIDDSPLKEREGSEQIGRIATLPEDTLDQELILSLLEKLAGDVIEKLDSRELSFRVVTVTVINSNFRTYTKSRTLNHPVSSKETLLEAAREILSEFLSESKTEFRRVGVRVGGLQKKKGQTSLFDY</sequence>
<protein>
    <recommendedName>
        <fullName evidence="1">DNA polymerase IV</fullName>
        <shortName evidence="1">Pol IV</shortName>
        <ecNumber evidence="1">2.7.7.7</ecNumber>
    </recommendedName>
</protein>
<name>DPO4_METAC</name>
<gene>
    <name evidence="1" type="primary">dbh</name>
    <name type="ordered locus">MA_4027</name>
</gene>
<reference key="1">
    <citation type="journal article" date="2002" name="Genome Res.">
        <title>The genome of Methanosarcina acetivorans reveals extensive metabolic and physiological diversity.</title>
        <authorList>
            <person name="Galagan J.E."/>
            <person name="Nusbaum C."/>
            <person name="Roy A."/>
            <person name="Endrizzi M.G."/>
            <person name="Macdonald P."/>
            <person name="FitzHugh W."/>
            <person name="Calvo S."/>
            <person name="Engels R."/>
            <person name="Smirnov S."/>
            <person name="Atnoor D."/>
            <person name="Brown A."/>
            <person name="Allen N."/>
            <person name="Naylor J."/>
            <person name="Stange-Thomann N."/>
            <person name="DeArellano K."/>
            <person name="Johnson R."/>
            <person name="Linton L."/>
            <person name="McEwan P."/>
            <person name="McKernan K."/>
            <person name="Talamas J."/>
            <person name="Tirrell A."/>
            <person name="Ye W."/>
            <person name="Zimmer A."/>
            <person name="Barber R.D."/>
            <person name="Cann I."/>
            <person name="Graham D.E."/>
            <person name="Grahame D.A."/>
            <person name="Guss A.M."/>
            <person name="Hedderich R."/>
            <person name="Ingram-Smith C."/>
            <person name="Kuettner H.C."/>
            <person name="Krzycki J.A."/>
            <person name="Leigh J.A."/>
            <person name="Li W."/>
            <person name="Liu J."/>
            <person name="Mukhopadhyay B."/>
            <person name="Reeve J.N."/>
            <person name="Smith K."/>
            <person name="Springer T.A."/>
            <person name="Umayam L.A."/>
            <person name="White O."/>
            <person name="White R.H."/>
            <person name="de Macario E.C."/>
            <person name="Ferry J.G."/>
            <person name="Jarrell K.F."/>
            <person name="Jing H."/>
            <person name="Macario A.J.L."/>
            <person name="Paulsen I.T."/>
            <person name="Pritchett M."/>
            <person name="Sowers K.R."/>
            <person name="Swanson R.V."/>
            <person name="Zinder S.H."/>
            <person name="Lander E."/>
            <person name="Metcalf W.W."/>
            <person name="Birren B."/>
        </authorList>
    </citation>
    <scope>NUCLEOTIDE SEQUENCE [LARGE SCALE GENOMIC DNA]</scope>
    <source>
        <strain>ATCC 35395 / DSM 2834 / JCM 12185 / C2A</strain>
    </source>
</reference>
<organism>
    <name type="scientific">Methanosarcina acetivorans (strain ATCC 35395 / DSM 2834 / JCM 12185 / C2A)</name>
    <dbReference type="NCBI Taxonomy" id="188937"/>
    <lineage>
        <taxon>Archaea</taxon>
        <taxon>Methanobacteriati</taxon>
        <taxon>Methanobacteriota</taxon>
        <taxon>Stenosarchaea group</taxon>
        <taxon>Methanomicrobia</taxon>
        <taxon>Methanosarcinales</taxon>
        <taxon>Methanosarcinaceae</taxon>
        <taxon>Methanosarcina</taxon>
    </lineage>
</organism>
<feature type="chain" id="PRO_0000173970" description="DNA polymerase IV">
    <location>
        <begin position="1"/>
        <end position="366"/>
    </location>
</feature>
<feature type="domain" description="UmuC" evidence="1">
    <location>
        <begin position="6"/>
        <end position="197"/>
    </location>
</feature>
<feature type="active site" evidence="1">
    <location>
        <position position="115"/>
    </location>
</feature>
<feature type="binding site" evidence="1">
    <location>
        <position position="10"/>
    </location>
    <ligand>
        <name>Mg(2+)</name>
        <dbReference type="ChEBI" id="CHEBI:18420"/>
    </ligand>
</feature>
<feature type="binding site" evidence="1">
    <location>
        <position position="114"/>
    </location>
    <ligand>
        <name>Mg(2+)</name>
        <dbReference type="ChEBI" id="CHEBI:18420"/>
    </ligand>
</feature>
<feature type="site" description="Substrate discrimination" evidence="1">
    <location>
        <position position="15"/>
    </location>
</feature>
<comment type="function">
    <text evidence="1">Poorly processive, error-prone DNA polymerase involved in untargeted mutagenesis. Copies undamaged DNA at stalled replication forks, which arise in vivo from mismatched or misaligned primer ends. These misaligned primers can be extended by PolIV. Exhibits no 3'-5' exonuclease (proofreading) activity. May be involved in translesional synthesis.</text>
</comment>
<comment type="catalytic activity">
    <reaction evidence="1">
        <text>DNA(n) + a 2'-deoxyribonucleoside 5'-triphosphate = DNA(n+1) + diphosphate</text>
        <dbReference type="Rhea" id="RHEA:22508"/>
        <dbReference type="Rhea" id="RHEA-COMP:17339"/>
        <dbReference type="Rhea" id="RHEA-COMP:17340"/>
        <dbReference type="ChEBI" id="CHEBI:33019"/>
        <dbReference type="ChEBI" id="CHEBI:61560"/>
        <dbReference type="ChEBI" id="CHEBI:173112"/>
        <dbReference type="EC" id="2.7.7.7"/>
    </reaction>
</comment>
<comment type="cofactor">
    <cofactor evidence="1">
        <name>Mg(2+)</name>
        <dbReference type="ChEBI" id="CHEBI:18420"/>
    </cofactor>
    <text evidence="1">Binds 2 magnesium ions per subunit.</text>
</comment>
<comment type="subunit">
    <text evidence="1">Monomer.</text>
</comment>
<comment type="subcellular location">
    <subcellularLocation>
        <location evidence="1">Cytoplasm</location>
    </subcellularLocation>
</comment>
<comment type="similarity">
    <text evidence="1">Belongs to the DNA polymerase type-Y family.</text>
</comment>
<evidence type="ECO:0000255" key="1">
    <source>
        <dbReference type="HAMAP-Rule" id="MF_01113"/>
    </source>
</evidence>